<organism>
    <name type="scientific">Schizosaccharomyces pombe (strain 972 / ATCC 24843)</name>
    <name type="common">Fission yeast</name>
    <dbReference type="NCBI Taxonomy" id="284812"/>
    <lineage>
        <taxon>Eukaryota</taxon>
        <taxon>Fungi</taxon>
        <taxon>Dikarya</taxon>
        <taxon>Ascomycota</taxon>
        <taxon>Taphrinomycotina</taxon>
        <taxon>Schizosaccharomycetes</taxon>
        <taxon>Schizosaccharomycetales</taxon>
        <taxon>Schizosaccharomycetaceae</taxon>
        <taxon>Schizosaccharomyces</taxon>
    </lineage>
</organism>
<dbReference type="EMBL" id="CU329671">
    <property type="protein sequence ID" value="CAA21887.2"/>
    <property type="molecule type" value="Genomic_DNA"/>
</dbReference>
<dbReference type="PIR" id="T40727">
    <property type="entry name" value="T40727"/>
</dbReference>
<dbReference type="RefSeq" id="NP_596476.2">
    <property type="nucleotide sequence ID" value="NM_001022396.2"/>
</dbReference>
<dbReference type="SMR" id="O94287"/>
<dbReference type="BioGRID" id="277647">
    <property type="interactions" value="1"/>
</dbReference>
<dbReference type="FunCoup" id="O94287">
    <property type="interactions" value="116"/>
</dbReference>
<dbReference type="STRING" id="284812.O94287"/>
<dbReference type="PaxDb" id="4896-SPBC887.02.1"/>
<dbReference type="EnsemblFungi" id="SPBC887.02.1">
    <property type="protein sequence ID" value="SPBC887.02.1:pep"/>
    <property type="gene ID" value="SPBC887.02"/>
</dbReference>
<dbReference type="KEGG" id="spo:2541132"/>
<dbReference type="PomBase" id="SPBC887.02"/>
<dbReference type="VEuPathDB" id="FungiDB:SPBC887.02"/>
<dbReference type="eggNOG" id="KOG0475">
    <property type="taxonomic scope" value="Eukaryota"/>
</dbReference>
<dbReference type="HOGENOM" id="CLU_003181_2_2_1"/>
<dbReference type="InParanoid" id="O94287"/>
<dbReference type="OMA" id="CLDWTPW"/>
<dbReference type="Reactome" id="R-SPO-2672351">
    <property type="pathway name" value="Stimuli-sensing channels"/>
</dbReference>
<dbReference type="PRO" id="PR:O94287"/>
<dbReference type="Proteomes" id="UP000002485">
    <property type="component" value="Chromosome II"/>
</dbReference>
<dbReference type="GO" id="GO:0034707">
    <property type="term" value="C:chloride channel complex"/>
    <property type="evidence" value="ECO:0007669"/>
    <property type="project" value="UniProtKB-KW"/>
</dbReference>
<dbReference type="GO" id="GO:0005769">
    <property type="term" value="C:early endosome"/>
    <property type="evidence" value="ECO:0000318"/>
    <property type="project" value="GO_Central"/>
</dbReference>
<dbReference type="GO" id="GO:0005794">
    <property type="term" value="C:Golgi apparatus"/>
    <property type="evidence" value="ECO:0000318"/>
    <property type="project" value="GO_Central"/>
</dbReference>
<dbReference type="GO" id="GO:0005886">
    <property type="term" value="C:plasma membrane"/>
    <property type="evidence" value="ECO:0000318"/>
    <property type="project" value="GO_Central"/>
</dbReference>
<dbReference type="GO" id="GO:0005247">
    <property type="term" value="F:voltage-gated chloride channel activity"/>
    <property type="evidence" value="ECO:0000318"/>
    <property type="project" value="GO_Central"/>
</dbReference>
<dbReference type="GO" id="GO:1902476">
    <property type="term" value="P:chloride transmembrane transport"/>
    <property type="evidence" value="ECO:0000255"/>
    <property type="project" value="PomBase"/>
</dbReference>
<dbReference type="CDD" id="cd03684">
    <property type="entry name" value="ClC_3_like"/>
    <property type="match status" value="1"/>
</dbReference>
<dbReference type="Gene3D" id="1.10.3080.10">
    <property type="entry name" value="Clc chloride channel"/>
    <property type="match status" value="1"/>
</dbReference>
<dbReference type="InterPro" id="IPR046342">
    <property type="entry name" value="CBS_dom_sf"/>
</dbReference>
<dbReference type="InterPro" id="IPR014743">
    <property type="entry name" value="Cl-channel_core"/>
</dbReference>
<dbReference type="InterPro" id="IPR001807">
    <property type="entry name" value="ClC"/>
</dbReference>
<dbReference type="PANTHER" id="PTHR45711">
    <property type="entry name" value="CHLORIDE CHANNEL PROTEIN"/>
    <property type="match status" value="1"/>
</dbReference>
<dbReference type="PANTHER" id="PTHR45711:SF6">
    <property type="entry name" value="CHLORIDE CHANNEL PROTEIN"/>
    <property type="match status" value="1"/>
</dbReference>
<dbReference type="Pfam" id="PF00654">
    <property type="entry name" value="Voltage_CLC"/>
    <property type="match status" value="1"/>
</dbReference>
<dbReference type="PRINTS" id="PR00762">
    <property type="entry name" value="CLCHANNEL"/>
</dbReference>
<dbReference type="SUPFAM" id="SSF54631">
    <property type="entry name" value="CBS-domain pair"/>
    <property type="match status" value="1"/>
</dbReference>
<dbReference type="SUPFAM" id="SSF81340">
    <property type="entry name" value="Clc chloride channel"/>
    <property type="match status" value="1"/>
</dbReference>
<dbReference type="PROSITE" id="PS51371">
    <property type="entry name" value="CBS"/>
    <property type="match status" value="2"/>
</dbReference>
<reference key="1">
    <citation type="journal article" date="2002" name="Nature">
        <title>The genome sequence of Schizosaccharomyces pombe.</title>
        <authorList>
            <person name="Wood V."/>
            <person name="Gwilliam R."/>
            <person name="Rajandream M.A."/>
            <person name="Lyne M.H."/>
            <person name="Lyne R."/>
            <person name="Stewart A."/>
            <person name="Sgouros J.G."/>
            <person name="Peat N."/>
            <person name="Hayles J."/>
            <person name="Baker S.G."/>
            <person name="Basham D."/>
            <person name="Bowman S."/>
            <person name="Brooks K."/>
            <person name="Brown D."/>
            <person name="Brown S."/>
            <person name="Chillingworth T."/>
            <person name="Churcher C.M."/>
            <person name="Collins M."/>
            <person name="Connor R."/>
            <person name="Cronin A."/>
            <person name="Davis P."/>
            <person name="Feltwell T."/>
            <person name="Fraser A."/>
            <person name="Gentles S."/>
            <person name="Goble A."/>
            <person name="Hamlin N."/>
            <person name="Harris D.E."/>
            <person name="Hidalgo J."/>
            <person name="Hodgson G."/>
            <person name="Holroyd S."/>
            <person name="Hornsby T."/>
            <person name="Howarth S."/>
            <person name="Huckle E.J."/>
            <person name="Hunt S."/>
            <person name="Jagels K."/>
            <person name="James K.D."/>
            <person name="Jones L."/>
            <person name="Jones M."/>
            <person name="Leather S."/>
            <person name="McDonald S."/>
            <person name="McLean J."/>
            <person name="Mooney P."/>
            <person name="Moule S."/>
            <person name="Mungall K.L."/>
            <person name="Murphy L.D."/>
            <person name="Niblett D."/>
            <person name="Odell C."/>
            <person name="Oliver K."/>
            <person name="O'Neil S."/>
            <person name="Pearson D."/>
            <person name="Quail M.A."/>
            <person name="Rabbinowitsch E."/>
            <person name="Rutherford K.M."/>
            <person name="Rutter S."/>
            <person name="Saunders D."/>
            <person name="Seeger K."/>
            <person name="Sharp S."/>
            <person name="Skelton J."/>
            <person name="Simmonds M.N."/>
            <person name="Squares R."/>
            <person name="Squares S."/>
            <person name="Stevens K."/>
            <person name="Taylor K."/>
            <person name="Taylor R.G."/>
            <person name="Tivey A."/>
            <person name="Walsh S.V."/>
            <person name="Warren T."/>
            <person name="Whitehead S."/>
            <person name="Woodward J.R."/>
            <person name="Volckaert G."/>
            <person name="Aert R."/>
            <person name="Robben J."/>
            <person name="Grymonprez B."/>
            <person name="Weltjens I."/>
            <person name="Vanstreels E."/>
            <person name="Rieger M."/>
            <person name="Schaefer M."/>
            <person name="Mueller-Auer S."/>
            <person name="Gabel C."/>
            <person name="Fuchs M."/>
            <person name="Duesterhoeft A."/>
            <person name="Fritzc C."/>
            <person name="Holzer E."/>
            <person name="Moestl D."/>
            <person name="Hilbert H."/>
            <person name="Borzym K."/>
            <person name="Langer I."/>
            <person name="Beck A."/>
            <person name="Lehrach H."/>
            <person name="Reinhardt R."/>
            <person name="Pohl T.M."/>
            <person name="Eger P."/>
            <person name="Zimmermann W."/>
            <person name="Wedler H."/>
            <person name="Wambutt R."/>
            <person name="Purnelle B."/>
            <person name="Goffeau A."/>
            <person name="Cadieu E."/>
            <person name="Dreano S."/>
            <person name="Gloux S."/>
            <person name="Lelaure V."/>
            <person name="Mottier S."/>
            <person name="Galibert F."/>
            <person name="Aves S.J."/>
            <person name="Xiang Z."/>
            <person name="Hunt C."/>
            <person name="Moore K."/>
            <person name="Hurst S.M."/>
            <person name="Lucas M."/>
            <person name="Rochet M."/>
            <person name="Gaillardin C."/>
            <person name="Tallada V.A."/>
            <person name="Garzon A."/>
            <person name="Thode G."/>
            <person name="Daga R.R."/>
            <person name="Cruzado L."/>
            <person name="Jimenez J."/>
            <person name="Sanchez M."/>
            <person name="del Rey F."/>
            <person name="Benito J."/>
            <person name="Dominguez A."/>
            <person name="Revuelta J.L."/>
            <person name="Moreno S."/>
            <person name="Armstrong J."/>
            <person name="Forsburg S.L."/>
            <person name="Cerutti L."/>
            <person name="Lowe T."/>
            <person name="McCombie W.R."/>
            <person name="Paulsen I."/>
            <person name="Potashkin J."/>
            <person name="Shpakovski G.V."/>
            <person name="Ussery D."/>
            <person name="Barrell B.G."/>
            <person name="Nurse P."/>
        </authorList>
    </citation>
    <scope>NUCLEOTIDE SEQUENCE [LARGE SCALE GENOMIC DNA]</scope>
    <source>
        <strain>972 / ATCC 24843</strain>
    </source>
</reference>
<reference key="2">
    <citation type="journal article" date="2011" name="Science">
        <title>Comparative functional genomics of the fission yeasts.</title>
        <authorList>
            <person name="Rhind N."/>
            <person name="Chen Z."/>
            <person name="Yassour M."/>
            <person name="Thompson D.A."/>
            <person name="Haas B.J."/>
            <person name="Habib N."/>
            <person name="Wapinski I."/>
            <person name="Roy S."/>
            <person name="Lin M.F."/>
            <person name="Heiman D.I."/>
            <person name="Young S.K."/>
            <person name="Furuya K."/>
            <person name="Guo Y."/>
            <person name="Pidoux A."/>
            <person name="Chen H.M."/>
            <person name="Robbertse B."/>
            <person name="Goldberg J.M."/>
            <person name="Aoki K."/>
            <person name="Bayne E.H."/>
            <person name="Berlin A.M."/>
            <person name="Desjardins C.A."/>
            <person name="Dobbs E."/>
            <person name="Dukaj L."/>
            <person name="Fan L."/>
            <person name="FitzGerald M.G."/>
            <person name="French C."/>
            <person name="Gujja S."/>
            <person name="Hansen K."/>
            <person name="Keifenheim D."/>
            <person name="Levin J.Z."/>
            <person name="Mosher R.A."/>
            <person name="Mueller C.A."/>
            <person name="Pfiffner J."/>
            <person name="Priest M."/>
            <person name="Russ C."/>
            <person name="Smialowska A."/>
            <person name="Swoboda P."/>
            <person name="Sykes S.M."/>
            <person name="Vaughn M."/>
            <person name="Vengrova S."/>
            <person name="Yoder R."/>
            <person name="Zeng Q."/>
            <person name="Allshire R."/>
            <person name="Baulcombe D."/>
            <person name="Birren B.W."/>
            <person name="Brown W."/>
            <person name="Ekwall K."/>
            <person name="Kellis M."/>
            <person name="Leatherwood J."/>
            <person name="Levin H."/>
            <person name="Margalit H."/>
            <person name="Martienssen R."/>
            <person name="Nieduszynski C.A."/>
            <person name="Spatafora J.W."/>
            <person name="Friedman N."/>
            <person name="Dalgaard J.Z."/>
            <person name="Baumann P."/>
            <person name="Niki H."/>
            <person name="Regev A."/>
            <person name="Nusbaum C."/>
        </authorList>
    </citation>
    <scope>REVISION OF GENE MODEL</scope>
</reference>
<protein>
    <recommendedName>
        <fullName>Uncharacterized chloride channel protein C887.02</fullName>
    </recommendedName>
</protein>
<feature type="chain" id="PRO_0000314105" description="Uncharacterized chloride channel protein C887.02">
    <location>
        <begin position="1"/>
        <end position="696"/>
    </location>
</feature>
<feature type="transmembrane region" description="Helical" evidence="1">
    <location>
        <begin position="38"/>
        <end position="58"/>
    </location>
</feature>
<feature type="transmembrane region" description="Helical" evidence="1">
    <location>
        <begin position="107"/>
        <end position="127"/>
    </location>
</feature>
<feature type="transmembrane region" description="Helical" evidence="1">
    <location>
        <begin position="215"/>
        <end position="235"/>
    </location>
</feature>
<feature type="transmembrane region" description="Helical" evidence="1">
    <location>
        <begin position="245"/>
        <end position="265"/>
    </location>
</feature>
<feature type="transmembrane region" description="Helical" evidence="1">
    <location>
        <begin position="292"/>
        <end position="312"/>
    </location>
</feature>
<feature type="transmembrane region" description="Helical" evidence="1">
    <location>
        <begin position="329"/>
        <end position="349"/>
    </location>
</feature>
<feature type="transmembrane region" description="Helical" evidence="1">
    <location>
        <begin position="380"/>
        <end position="400"/>
    </location>
</feature>
<feature type="transmembrane region" description="Helical" evidence="1">
    <location>
        <begin position="402"/>
        <end position="422"/>
    </location>
</feature>
<feature type="transmembrane region" description="Helical" evidence="1">
    <location>
        <begin position="433"/>
        <end position="453"/>
    </location>
</feature>
<feature type="transmembrane region" description="Helical" evidence="1">
    <location>
        <begin position="457"/>
        <end position="477"/>
    </location>
</feature>
<feature type="domain" description="CBS 1" evidence="2">
    <location>
        <begin position="527"/>
        <end position="587"/>
    </location>
</feature>
<feature type="domain" description="CBS 2" evidence="2">
    <location>
        <begin position="617"/>
        <end position="674"/>
    </location>
</feature>
<comment type="function">
    <text evidence="3">Voltage-gated chloride channel.</text>
</comment>
<comment type="subcellular location">
    <subcellularLocation>
        <location evidence="3">Membrane</location>
        <topology evidence="3">Multi-pass membrane protein</topology>
    </subcellularLocation>
</comment>
<comment type="similarity">
    <text evidence="3">Belongs to the chloride channel (TC 2.A.49) family.</text>
</comment>
<evidence type="ECO:0000255" key="1"/>
<evidence type="ECO:0000255" key="2">
    <source>
        <dbReference type="PROSITE-ProRule" id="PRU00703"/>
    </source>
</evidence>
<evidence type="ECO:0000305" key="3"/>
<accession>O94287</accession>
<proteinExistence type="inferred from homology"/>
<sequence length="696" mass="76606">MKDDQLIDWIHERYEEQKSANRLAGRFRFLGLETKYSIISIISGIFIGLTAALLNALASLLNSFREGYCTVNILFDKQTCCSTLTEDYECQEFFFWRNNHSVFVSCLIYVSVSVGFAFIATTLGYVVAPAARASGIPTIKAILSGYKYPDMNVFFSIKTLCSKSLAVCFSVASGLWVGKEGPFVHIATNIIYLVERIAPSLADSEIFTRQLLAAAMASGIAASFNAPVGGVIFALEQLASSSFPSLFTGSIWYEFLCSASSVVALQLIRSWHTDVGYLSYVSLDRRWSYKDTLPFIFISILCGCLGSVLIYLNMKFASKTKGFSKISNVFFVIFLSLITSLTAYAILGESELLFNPMELFPQVINSCSPSSSTVLCETTFWVTAIVLFTSALLGLLLTSATFGAAIPTGIIVPSLAIGACIGRAVGTLLKSRFPSLAGTSIYGVIGSIAFLSSTTRLVVALVVILFELTGALNIALPLMLATLISKWVSDSIIETSIYDAWIQFRNIPYFPSSNSLKFSIPLNFPVRSPEQLVRLPIRSCSIEELERAMHDSSQSFFVVLKNDTEFFEGFISRNKVSELLNRRPMSSNMQTTDNTGLDPLRSASAPVDSTFDLFDYIHPTTFTLNYDTPPVLMLKLFKDAGITNLALLNHGKLHGVLTKIDIIEYAKKCKTHTGNTYSELPTGVTYETDIFNRADD</sequence>
<gene>
    <name type="ORF">SPBC887.02</name>
</gene>
<keyword id="KW-0129">CBS domain</keyword>
<keyword id="KW-0868">Chloride</keyword>
<keyword id="KW-0869">Chloride channel</keyword>
<keyword id="KW-0407">Ion channel</keyword>
<keyword id="KW-0406">Ion transport</keyword>
<keyword id="KW-0472">Membrane</keyword>
<keyword id="KW-1185">Reference proteome</keyword>
<keyword id="KW-0677">Repeat</keyword>
<keyword id="KW-0812">Transmembrane</keyword>
<keyword id="KW-1133">Transmembrane helix</keyword>
<keyword id="KW-0813">Transport</keyword>
<keyword id="KW-0851">Voltage-gated channel</keyword>
<name>YOO2_SCHPO</name>